<comment type="function">
    <text evidence="1">Specifically methylates the pseudouridine at position 1915 (m3Psi1915) in 23S rRNA.</text>
</comment>
<comment type="catalytic activity">
    <reaction evidence="1">
        <text>pseudouridine(1915) in 23S rRNA + S-adenosyl-L-methionine = N(3)-methylpseudouridine(1915) in 23S rRNA + S-adenosyl-L-homocysteine + H(+)</text>
        <dbReference type="Rhea" id="RHEA:42752"/>
        <dbReference type="Rhea" id="RHEA-COMP:10221"/>
        <dbReference type="Rhea" id="RHEA-COMP:10222"/>
        <dbReference type="ChEBI" id="CHEBI:15378"/>
        <dbReference type="ChEBI" id="CHEBI:57856"/>
        <dbReference type="ChEBI" id="CHEBI:59789"/>
        <dbReference type="ChEBI" id="CHEBI:65314"/>
        <dbReference type="ChEBI" id="CHEBI:74486"/>
        <dbReference type="EC" id="2.1.1.177"/>
    </reaction>
</comment>
<comment type="subunit">
    <text evidence="1">Homodimer.</text>
</comment>
<comment type="subcellular location">
    <subcellularLocation>
        <location evidence="1">Cytoplasm</location>
    </subcellularLocation>
</comment>
<comment type="similarity">
    <text evidence="1">Belongs to the RNA methyltransferase RlmH family.</text>
</comment>
<evidence type="ECO:0000255" key="1">
    <source>
        <dbReference type="HAMAP-Rule" id="MF_00658"/>
    </source>
</evidence>
<name>RLMH_TERTT</name>
<proteinExistence type="inferred from homology"/>
<sequence>MKISILAVGGKMPAWVQEGYAEYAKRLPREIEPRMVELALANRSKSYSVDAVKQAEGEQILGAYDNAPGHKRLICLDVLGKSLRTEMLAEKMAAWQMDGVNPCLVIGGPDGLSQSCLQRADEKWSLSGLTMPHPLVRVLLIEQLYRAWTILQNHPYHK</sequence>
<dbReference type="EC" id="2.1.1.177" evidence="1"/>
<dbReference type="EMBL" id="CP001614">
    <property type="protein sequence ID" value="ACR12487.1"/>
    <property type="molecule type" value="Genomic_DNA"/>
</dbReference>
<dbReference type="RefSeq" id="WP_015818599.1">
    <property type="nucleotide sequence ID" value="NC_012997.1"/>
</dbReference>
<dbReference type="SMR" id="C5BNN2"/>
<dbReference type="STRING" id="377629.TERTU_0602"/>
<dbReference type="KEGG" id="ttu:TERTU_0602"/>
<dbReference type="eggNOG" id="COG1576">
    <property type="taxonomic scope" value="Bacteria"/>
</dbReference>
<dbReference type="HOGENOM" id="CLU_100552_1_0_6"/>
<dbReference type="OrthoDB" id="9806643at2"/>
<dbReference type="Proteomes" id="UP000009080">
    <property type="component" value="Chromosome"/>
</dbReference>
<dbReference type="GO" id="GO:0005737">
    <property type="term" value="C:cytoplasm"/>
    <property type="evidence" value="ECO:0007669"/>
    <property type="project" value="UniProtKB-SubCell"/>
</dbReference>
<dbReference type="GO" id="GO:0070038">
    <property type="term" value="F:rRNA (pseudouridine-N3-)-methyltransferase activity"/>
    <property type="evidence" value="ECO:0007669"/>
    <property type="project" value="UniProtKB-UniRule"/>
</dbReference>
<dbReference type="CDD" id="cd18081">
    <property type="entry name" value="RlmH-like"/>
    <property type="match status" value="1"/>
</dbReference>
<dbReference type="Gene3D" id="3.40.1280.10">
    <property type="match status" value="1"/>
</dbReference>
<dbReference type="HAMAP" id="MF_00658">
    <property type="entry name" value="23SrRNA_methyltr_H"/>
    <property type="match status" value="1"/>
</dbReference>
<dbReference type="InterPro" id="IPR029028">
    <property type="entry name" value="Alpha/beta_knot_MTases"/>
</dbReference>
<dbReference type="InterPro" id="IPR003742">
    <property type="entry name" value="RlmH-like"/>
</dbReference>
<dbReference type="InterPro" id="IPR029026">
    <property type="entry name" value="tRNA_m1G_MTases_N"/>
</dbReference>
<dbReference type="NCBIfam" id="NF000986">
    <property type="entry name" value="PRK00103.1-4"/>
    <property type="match status" value="1"/>
</dbReference>
<dbReference type="NCBIfam" id="TIGR00246">
    <property type="entry name" value="tRNA_RlmH_YbeA"/>
    <property type="match status" value="1"/>
</dbReference>
<dbReference type="PANTHER" id="PTHR33603">
    <property type="entry name" value="METHYLTRANSFERASE"/>
    <property type="match status" value="1"/>
</dbReference>
<dbReference type="PANTHER" id="PTHR33603:SF1">
    <property type="entry name" value="RIBOSOMAL RNA LARGE SUBUNIT METHYLTRANSFERASE H"/>
    <property type="match status" value="1"/>
</dbReference>
<dbReference type="Pfam" id="PF02590">
    <property type="entry name" value="SPOUT_MTase"/>
    <property type="match status" value="1"/>
</dbReference>
<dbReference type="PIRSF" id="PIRSF004505">
    <property type="entry name" value="MT_bac"/>
    <property type="match status" value="1"/>
</dbReference>
<dbReference type="SUPFAM" id="SSF75217">
    <property type="entry name" value="alpha/beta knot"/>
    <property type="match status" value="1"/>
</dbReference>
<organism>
    <name type="scientific">Teredinibacter turnerae (strain ATCC 39867 / T7901)</name>
    <dbReference type="NCBI Taxonomy" id="377629"/>
    <lineage>
        <taxon>Bacteria</taxon>
        <taxon>Pseudomonadati</taxon>
        <taxon>Pseudomonadota</taxon>
        <taxon>Gammaproteobacteria</taxon>
        <taxon>Cellvibrionales</taxon>
        <taxon>Cellvibrionaceae</taxon>
        <taxon>Teredinibacter</taxon>
    </lineage>
</organism>
<reference key="1">
    <citation type="journal article" date="2009" name="PLoS ONE">
        <title>The complete genome of Teredinibacter turnerae T7901: an intracellular endosymbiont of marine wood-boring bivalves (shipworms).</title>
        <authorList>
            <person name="Yang J.C."/>
            <person name="Madupu R."/>
            <person name="Durkin A.S."/>
            <person name="Ekborg N.A."/>
            <person name="Pedamallu C.S."/>
            <person name="Hostetler J.B."/>
            <person name="Radune D."/>
            <person name="Toms B.S."/>
            <person name="Henrissat B."/>
            <person name="Coutinho P.M."/>
            <person name="Schwarz S."/>
            <person name="Field L."/>
            <person name="Trindade-Silva A.E."/>
            <person name="Soares C.A.G."/>
            <person name="Elshahawi S."/>
            <person name="Hanora A."/>
            <person name="Schmidt E.W."/>
            <person name="Haygood M.G."/>
            <person name="Posfai J."/>
            <person name="Benner J."/>
            <person name="Madinger C."/>
            <person name="Nove J."/>
            <person name="Anton B."/>
            <person name="Chaudhary K."/>
            <person name="Foster J."/>
            <person name="Holman A."/>
            <person name="Kumar S."/>
            <person name="Lessard P.A."/>
            <person name="Luyten Y.A."/>
            <person name="Slatko B."/>
            <person name="Wood N."/>
            <person name="Wu B."/>
            <person name="Teplitski M."/>
            <person name="Mougous J.D."/>
            <person name="Ward N."/>
            <person name="Eisen J.A."/>
            <person name="Badger J.H."/>
            <person name="Distel D.L."/>
        </authorList>
    </citation>
    <scope>NUCLEOTIDE SEQUENCE [LARGE SCALE GENOMIC DNA]</scope>
    <source>
        <strain>ATCC 39867 / T7901</strain>
    </source>
</reference>
<gene>
    <name evidence="1" type="primary">rlmH</name>
    <name type="ordered locus">TERTU_0602</name>
</gene>
<accession>C5BNN2</accession>
<keyword id="KW-0963">Cytoplasm</keyword>
<keyword id="KW-0489">Methyltransferase</keyword>
<keyword id="KW-1185">Reference proteome</keyword>
<keyword id="KW-0698">rRNA processing</keyword>
<keyword id="KW-0949">S-adenosyl-L-methionine</keyword>
<keyword id="KW-0808">Transferase</keyword>
<protein>
    <recommendedName>
        <fullName evidence="1">Ribosomal RNA large subunit methyltransferase H</fullName>
        <ecNumber evidence="1">2.1.1.177</ecNumber>
    </recommendedName>
    <alternativeName>
        <fullName evidence="1">23S rRNA (pseudouridine1915-N3)-methyltransferase</fullName>
    </alternativeName>
    <alternativeName>
        <fullName evidence="1">23S rRNA m3Psi1915 methyltransferase</fullName>
    </alternativeName>
    <alternativeName>
        <fullName evidence="1">rRNA (pseudouridine-N3-)-methyltransferase RlmH</fullName>
    </alternativeName>
</protein>
<feature type="chain" id="PRO_1000212465" description="Ribosomal RNA large subunit methyltransferase H">
    <location>
        <begin position="1"/>
        <end position="158"/>
    </location>
</feature>
<feature type="binding site" evidence="1">
    <location>
        <position position="76"/>
    </location>
    <ligand>
        <name>S-adenosyl-L-methionine</name>
        <dbReference type="ChEBI" id="CHEBI:59789"/>
    </ligand>
</feature>
<feature type="binding site" evidence="1">
    <location>
        <position position="107"/>
    </location>
    <ligand>
        <name>S-adenosyl-L-methionine</name>
        <dbReference type="ChEBI" id="CHEBI:59789"/>
    </ligand>
</feature>
<feature type="binding site" evidence="1">
    <location>
        <begin position="126"/>
        <end position="131"/>
    </location>
    <ligand>
        <name>S-adenosyl-L-methionine</name>
        <dbReference type="ChEBI" id="CHEBI:59789"/>
    </ligand>
</feature>